<reference key="1">
    <citation type="journal article" date="1998" name="DNA Res.">
        <title>Prediction of the coding sequences of unidentified human genes. XII. The complete sequences of 100 new cDNA clones from brain which code for large proteins in vitro.</title>
        <authorList>
            <person name="Nagase T."/>
            <person name="Ishikawa K."/>
            <person name="Suyama M."/>
            <person name="Kikuno R."/>
            <person name="Hirosawa M."/>
            <person name="Miyajima N."/>
            <person name="Tanaka A."/>
            <person name="Kotani H."/>
            <person name="Nomura N."/>
            <person name="Ohara O."/>
        </authorList>
    </citation>
    <scope>NUCLEOTIDE SEQUENCE [LARGE SCALE MRNA] (ISOFORM 3)</scope>
    <source>
        <tissue>Brain</tissue>
    </source>
</reference>
<reference key="2">
    <citation type="journal article" date="2004" name="Nat. Genet.">
        <title>Complete sequencing and characterization of 21,243 full-length human cDNAs.</title>
        <authorList>
            <person name="Ota T."/>
            <person name="Suzuki Y."/>
            <person name="Nishikawa T."/>
            <person name="Otsuki T."/>
            <person name="Sugiyama T."/>
            <person name="Irie R."/>
            <person name="Wakamatsu A."/>
            <person name="Hayashi K."/>
            <person name="Sato H."/>
            <person name="Nagai K."/>
            <person name="Kimura K."/>
            <person name="Makita H."/>
            <person name="Sekine M."/>
            <person name="Obayashi M."/>
            <person name="Nishi T."/>
            <person name="Shibahara T."/>
            <person name="Tanaka T."/>
            <person name="Ishii S."/>
            <person name="Yamamoto J."/>
            <person name="Saito K."/>
            <person name="Kawai Y."/>
            <person name="Isono Y."/>
            <person name="Nakamura Y."/>
            <person name="Nagahari K."/>
            <person name="Murakami K."/>
            <person name="Yasuda T."/>
            <person name="Iwayanagi T."/>
            <person name="Wagatsuma M."/>
            <person name="Shiratori A."/>
            <person name="Sudo H."/>
            <person name="Hosoiri T."/>
            <person name="Kaku Y."/>
            <person name="Kodaira H."/>
            <person name="Kondo H."/>
            <person name="Sugawara M."/>
            <person name="Takahashi M."/>
            <person name="Kanda K."/>
            <person name="Yokoi T."/>
            <person name="Furuya T."/>
            <person name="Kikkawa E."/>
            <person name="Omura Y."/>
            <person name="Abe K."/>
            <person name="Kamihara K."/>
            <person name="Katsuta N."/>
            <person name="Sato K."/>
            <person name="Tanikawa M."/>
            <person name="Yamazaki M."/>
            <person name="Ninomiya K."/>
            <person name="Ishibashi T."/>
            <person name="Yamashita H."/>
            <person name="Murakawa K."/>
            <person name="Fujimori K."/>
            <person name="Tanai H."/>
            <person name="Kimata M."/>
            <person name="Watanabe M."/>
            <person name="Hiraoka S."/>
            <person name="Chiba Y."/>
            <person name="Ishida S."/>
            <person name="Ono Y."/>
            <person name="Takiguchi S."/>
            <person name="Watanabe S."/>
            <person name="Yosida M."/>
            <person name="Hotuta T."/>
            <person name="Kusano J."/>
            <person name="Kanehori K."/>
            <person name="Takahashi-Fujii A."/>
            <person name="Hara H."/>
            <person name="Tanase T.-O."/>
            <person name="Nomura Y."/>
            <person name="Togiya S."/>
            <person name="Komai F."/>
            <person name="Hara R."/>
            <person name="Takeuchi K."/>
            <person name="Arita M."/>
            <person name="Imose N."/>
            <person name="Musashino K."/>
            <person name="Yuuki H."/>
            <person name="Oshima A."/>
            <person name="Sasaki N."/>
            <person name="Aotsuka S."/>
            <person name="Yoshikawa Y."/>
            <person name="Matsunawa H."/>
            <person name="Ichihara T."/>
            <person name="Shiohata N."/>
            <person name="Sano S."/>
            <person name="Moriya S."/>
            <person name="Momiyama H."/>
            <person name="Satoh N."/>
            <person name="Takami S."/>
            <person name="Terashima Y."/>
            <person name="Suzuki O."/>
            <person name="Nakagawa S."/>
            <person name="Senoh A."/>
            <person name="Mizoguchi H."/>
            <person name="Goto Y."/>
            <person name="Shimizu F."/>
            <person name="Wakebe H."/>
            <person name="Hishigaki H."/>
            <person name="Watanabe T."/>
            <person name="Sugiyama A."/>
            <person name="Takemoto M."/>
            <person name="Kawakami B."/>
            <person name="Yamazaki M."/>
            <person name="Watanabe K."/>
            <person name="Kumagai A."/>
            <person name="Itakura S."/>
            <person name="Fukuzumi Y."/>
            <person name="Fujimori Y."/>
            <person name="Komiyama M."/>
            <person name="Tashiro H."/>
            <person name="Tanigami A."/>
            <person name="Fujiwara T."/>
            <person name="Ono T."/>
            <person name="Yamada K."/>
            <person name="Fujii Y."/>
            <person name="Ozaki K."/>
            <person name="Hirao M."/>
            <person name="Ohmori Y."/>
            <person name="Kawabata A."/>
            <person name="Hikiji T."/>
            <person name="Kobatake N."/>
            <person name="Inagaki H."/>
            <person name="Ikema Y."/>
            <person name="Okamoto S."/>
            <person name="Okitani R."/>
            <person name="Kawakami T."/>
            <person name="Noguchi S."/>
            <person name="Itoh T."/>
            <person name="Shigeta K."/>
            <person name="Senba T."/>
            <person name="Matsumura K."/>
            <person name="Nakajima Y."/>
            <person name="Mizuno T."/>
            <person name="Morinaga M."/>
            <person name="Sasaki M."/>
            <person name="Togashi T."/>
            <person name="Oyama M."/>
            <person name="Hata H."/>
            <person name="Watanabe M."/>
            <person name="Komatsu T."/>
            <person name="Mizushima-Sugano J."/>
            <person name="Satoh T."/>
            <person name="Shirai Y."/>
            <person name="Takahashi Y."/>
            <person name="Nakagawa K."/>
            <person name="Okumura K."/>
            <person name="Nagase T."/>
            <person name="Nomura N."/>
            <person name="Kikuchi H."/>
            <person name="Masuho Y."/>
            <person name="Yamashita R."/>
            <person name="Nakai K."/>
            <person name="Yada T."/>
            <person name="Nakamura Y."/>
            <person name="Ohara O."/>
            <person name="Isogai T."/>
            <person name="Sugano S."/>
        </authorList>
    </citation>
    <scope>NUCLEOTIDE SEQUENCE [LARGE SCALE MRNA] (ISOFORMS 3 AND 4)</scope>
    <source>
        <tissue>Cerebellum</tissue>
        <tissue>Embryo</tissue>
    </source>
</reference>
<reference key="3">
    <citation type="journal article" date="2001" name="Nature">
        <title>The DNA sequence and comparative analysis of human chromosome 20.</title>
        <authorList>
            <person name="Deloukas P."/>
            <person name="Matthews L.H."/>
            <person name="Ashurst J.L."/>
            <person name="Burton J."/>
            <person name="Gilbert J.G.R."/>
            <person name="Jones M."/>
            <person name="Stavrides G."/>
            <person name="Almeida J.P."/>
            <person name="Babbage A.K."/>
            <person name="Bagguley C.L."/>
            <person name="Bailey J."/>
            <person name="Barlow K.F."/>
            <person name="Bates K.N."/>
            <person name="Beard L.M."/>
            <person name="Beare D.M."/>
            <person name="Beasley O.P."/>
            <person name="Bird C.P."/>
            <person name="Blakey S.E."/>
            <person name="Bridgeman A.M."/>
            <person name="Brown A.J."/>
            <person name="Buck D."/>
            <person name="Burrill W.D."/>
            <person name="Butler A.P."/>
            <person name="Carder C."/>
            <person name="Carter N.P."/>
            <person name="Chapman J.C."/>
            <person name="Clamp M."/>
            <person name="Clark G."/>
            <person name="Clark L.N."/>
            <person name="Clark S.Y."/>
            <person name="Clee C.M."/>
            <person name="Clegg S."/>
            <person name="Cobley V.E."/>
            <person name="Collier R.E."/>
            <person name="Connor R.E."/>
            <person name="Corby N.R."/>
            <person name="Coulson A."/>
            <person name="Coville G.J."/>
            <person name="Deadman R."/>
            <person name="Dhami P.D."/>
            <person name="Dunn M."/>
            <person name="Ellington A.G."/>
            <person name="Frankland J.A."/>
            <person name="Fraser A."/>
            <person name="French L."/>
            <person name="Garner P."/>
            <person name="Grafham D.V."/>
            <person name="Griffiths C."/>
            <person name="Griffiths M.N.D."/>
            <person name="Gwilliam R."/>
            <person name="Hall R.E."/>
            <person name="Hammond S."/>
            <person name="Harley J.L."/>
            <person name="Heath P.D."/>
            <person name="Ho S."/>
            <person name="Holden J.L."/>
            <person name="Howden P.J."/>
            <person name="Huckle E."/>
            <person name="Hunt A.R."/>
            <person name="Hunt S.E."/>
            <person name="Jekosch K."/>
            <person name="Johnson C.M."/>
            <person name="Johnson D."/>
            <person name="Kay M.P."/>
            <person name="Kimberley A.M."/>
            <person name="King A."/>
            <person name="Knights A."/>
            <person name="Laird G.K."/>
            <person name="Lawlor S."/>
            <person name="Lehvaeslaiho M.H."/>
            <person name="Leversha M.A."/>
            <person name="Lloyd C."/>
            <person name="Lloyd D.M."/>
            <person name="Lovell J.D."/>
            <person name="Marsh V.L."/>
            <person name="Martin S.L."/>
            <person name="McConnachie L.J."/>
            <person name="McLay K."/>
            <person name="McMurray A.A."/>
            <person name="Milne S.A."/>
            <person name="Mistry D."/>
            <person name="Moore M.J.F."/>
            <person name="Mullikin J.C."/>
            <person name="Nickerson T."/>
            <person name="Oliver K."/>
            <person name="Parker A."/>
            <person name="Patel R."/>
            <person name="Pearce T.A.V."/>
            <person name="Peck A.I."/>
            <person name="Phillimore B.J.C.T."/>
            <person name="Prathalingam S.R."/>
            <person name="Plumb R.W."/>
            <person name="Ramsay H."/>
            <person name="Rice C.M."/>
            <person name="Ross M.T."/>
            <person name="Scott C.E."/>
            <person name="Sehra H.K."/>
            <person name="Shownkeen R."/>
            <person name="Sims S."/>
            <person name="Skuce C.D."/>
            <person name="Smith M.L."/>
            <person name="Soderlund C."/>
            <person name="Steward C.A."/>
            <person name="Sulston J.E."/>
            <person name="Swann R.M."/>
            <person name="Sycamore N."/>
            <person name="Taylor R."/>
            <person name="Tee L."/>
            <person name="Thomas D.W."/>
            <person name="Thorpe A."/>
            <person name="Tracey A."/>
            <person name="Tromans A.C."/>
            <person name="Vaudin M."/>
            <person name="Wall M."/>
            <person name="Wallis J.M."/>
            <person name="Whitehead S.L."/>
            <person name="Whittaker P."/>
            <person name="Willey D.L."/>
            <person name="Williams L."/>
            <person name="Williams S.A."/>
            <person name="Wilming L."/>
            <person name="Wray P.W."/>
            <person name="Hubbard T."/>
            <person name="Durbin R.M."/>
            <person name="Bentley D.R."/>
            <person name="Beck S."/>
            <person name="Rogers J."/>
        </authorList>
    </citation>
    <scope>NUCLEOTIDE SEQUENCE [LARGE SCALE GENOMIC DNA]</scope>
</reference>
<reference key="4">
    <citation type="journal article" date="2004" name="Genome Res.">
        <title>The status, quality, and expansion of the NIH full-length cDNA project: the Mammalian Gene Collection (MGC).</title>
        <authorList>
            <consortium name="The MGC Project Team"/>
        </authorList>
    </citation>
    <scope>NUCLEOTIDE SEQUENCE [LARGE SCALE MRNA] (ISOFORM 3)</scope>
    <source>
        <tissue>Brain</tissue>
    </source>
</reference>
<reference key="5">
    <citation type="journal article" date="2008" name="Proc. Natl. Acad. Sci. U.S.A.">
        <title>A quantitative atlas of mitotic phosphorylation.</title>
        <authorList>
            <person name="Dephoure N."/>
            <person name="Zhou C."/>
            <person name="Villen J."/>
            <person name="Beausoleil S.A."/>
            <person name="Bakalarski C.E."/>
            <person name="Elledge S.J."/>
            <person name="Gygi S.P."/>
        </authorList>
    </citation>
    <scope>PHOSPHORYLATION [LARGE SCALE ANALYSIS] AT SER-1169 AND SER-1255</scope>
    <scope>IDENTIFICATION BY MASS SPECTROMETRY [LARGE SCALE ANALYSIS]</scope>
    <source>
        <tissue>Cervix carcinoma</tissue>
    </source>
</reference>
<reference key="6">
    <citation type="journal article" date="2010" name="Am. J. Pathol.">
        <title>Adiponectin lowers glucose production by increasing SOGA.</title>
        <authorList>
            <person name="Cowerd R.B."/>
            <person name="Asmar M.M."/>
            <person name="Alderman J.M."/>
            <person name="Alderman E.A."/>
            <person name="Garland A.L."/>
            <person name="Busby W.H."/>
            <person name="Bodnar W.M."/>
            <person name="Rusyn I."/>
            <person name="Medoff B.D."/>
            <person name="Tisch R."/>
            <person name="Mayer-Davis E."/>
            <person name="Swenberg J.A."/>
            <person name="Zeisel S.H."/>
            <person name="Combs T.P."/>
        </authorList>
    </citation>
    <scope>PROTEOLYTIC PROCESSING</scope>
    <scope>SUBCELLULAR LOCATION</scope>
    <scope>INDUCTION</scope>
</reference>
<reference key="7">
    <citation type="journal article" date="2013" name="J. Proteome Res.">
        <title>Toward a comprehensive characterization of a human cancer cell phosphoproteome.</title>
        <authorList>
            <person name="Zhou H."/>
            <person name="Di Palma S."/>
            <person name="Preisinger C."/>
            <person name="Peng M."/>
            <person name="Polat A.N."/>
            <person name="Heck A.J."/>
            <person name="Mohammed S."/>
        </authorList>
    </citation>
    <scope>PHOSPHORYLATION [LARGE SCALE ANALYSIS] AT SER-1255</scope>
    <scope>IDENTIFICATION BY MASS SPECTROMETRY [LARGE SCALE ANALYSIS]</scope>
    <source>
        <tissue>Cervix carcinoma</tissue>
        <tissue>Erythroleukemia</tissue>
    </source>
</reference>
<reference key="8">
    <citation type="journal article" date="2021" name="Chromosome Res.">
        <title>SOGA1 and SOGA2/MTCL1 are CLASP-interacting proteins required for faithful chromosome segregation in human cells.</title>
        <authorList>
            <person name="Ferreira L.T."/>
            <person name="Logarinho E."/>
            <person name="Macedo J.C."/>
            <person name="Maia A.R.R."/>
            <person name="Maiato H."/>
        </authorList>
    </citation>
    <scope>FUNCTION</scope>
    <scope>SUBCELLULAR LOCATION</scope>
    <scope>INTERACTION WITH CLASP1 AND CLASP2</scope>
    <scope>PHOSPHORYLATION</scope>
</reference>
<dbReference type="EMBL" id="AB020696">
    <property type="protein sequence ID" value="BAA74912.2"/>
    <property type="status" value="ALT_INIT"/>
    <property type="molecule type" value="mRNA"/>
</dbReference>
<dbReference type="EMBL" id="AK022023">
    <property type="protein sequence ID" value="BAB13954.1"/>
    <property type="molecule type" value="mRNA"/>
</dbReference>
<dbReference type="EMBL" id="AK126630">
    <property type="protein sequence ID" value="BAC86621.1"/>
    <property type="molecule type" value="mRNA"/>
</dbReference>
<dbReference type="EMBL" id="AL079335">
    <property type="status" value="NOT_ANNOTATED_CDS"/>
    <property type="molecule type" value="Genomic_DNA"/>
</dbReference>
<dbReference type="EMBL" id="AL132768">
    <property type="status" value="NOT_ANNOTATED_CDS"/>
    <property type="molecule type" value="Genomic_DNA"/>
</dbReference>
<dbReference type="EMBL" id="AL391602">
    <property type="status" value="NOT_ANNOTATED_CDS"/>
    <property type="molecule type" value="Genomic_DNA"/>
</dbReference>
<dbReference type="EMBL" id="BC113405">
    <property type="protein sequence ID" value="AAI13406.1"/>
    <property type="molecule type" value="mRNA"/>
</dbReference>
<dbReference type="EMBL" id="BC113433">
    <property type="protein sequence ID" value="AAI13434.1"/>
    <property type="molecule type" value="mRNA"/>
</dbReference>
<dbReference type="CCDS" id="CCDS46598.1">
    <molecule id="O94964-4"/>
</dbReference>
<dbReference type="CCDS" id="CCDS54459.1">
    <molecule id="O94964-2"/>
</dbReference>
<dbReference type="RefSeq" id="NP_542194.2">
    <molecule id="O94964-2"/>
    <property type="nucleotide sequence ID" value="NM_080627.4"/>
</dbReference>
<dbReference type="RefSeq" id="NP_954650.2">
    <property type="nucleotide sequence ID" value="NM_199181.2"/>
</dbReference>
<dbReference type="SMR" id="O94964"/>
<dbReference type="BioGRID" id="126666">
    <property type="interactions" value="130"/>
</dbReference>
<dbReference type="FunCoup" id="O94964">
    <property type="interactions" value="809"/>
</dbReference>
<dbReference type="IntAct" id="O94964">
    <property type="interactions" value="70"/>
</dbReference>
<dbReference type="MINT" id="O94964"/>
<dbReference type="STRING" id="9606.ENSP00000237536"/>
<dbReference type="GlyGen" id="O94964">
    <property type="glycosylation" value="2 sites, 1 O-linked glycan (1 site)"/>
</dbReference>
<dbReference type="iPTMnet" id="O94964"/>
<dbReference type="PhosphoSitePlus" id="O94964"/>
<dbReference type="SwissPalm" id="O94964"/>
<dbReference type="BioMuta" id="SOGA1"/>
<dbReference type="jPOST" id="O94964"/>
<dbReference type="MassIVE" id="O94964"/>
<dbReference type="PaxDb" id="9606-ENSP00000237536"/>
<dbReference type="PeptideAtlas" id="O94964"/>
<dbReference type="ProteomicsDB" id="50579">
    <molecule id="O94964-1"/>
</dbReference>
<dbReference type="ProteomicsDB" id="50580">
    <molecule id="O94964-2"/>
</dbReference>
<dbReference type="ProteomicsDB" id="50581">
    <molecule id="O94964-3"/>
</dbReference>
<dbReference type="ProteomicsDB" id="50582">
    <molecule id="O94964-4"/>
</dbReference>
<dbReference type="Pumba" id="O94964"/>
<dbReference type="Antibodypedia" id="55174">
    <property type="antibodies" value="124 antibodies from 24 providers"/>
</dbReference>
<dbReference type="DNASU" id="140710"/>
<dbReference type="Ensembl" id="ENST00000237536.9">
    <molecule id="O94964-2"/>
    <property type="protein sequence ID" value="ENSP00000237536.4"/>
    <property type="gene ID" value="ENSG00000149639.15"/>
</dbReference>
<dbReference type="GeneID" id="140710"/>
<dbReference type="KEGG" id="hsa:140710"/>
<dbReference type="MANE-Select" id="ENST00000237536.9">
    <property type="protein sequence ID" value="ENSP00000237536.4"/>
    <property type="RefSeq nucleotide sequence ID" value="NM_080627.4"/>
    <property type="RefSeq protein sequence ID" value="NP_542194.2"/>
</dbReference>
<dbReference type="UCSC" id="uc021wcx.2">
    <molecule id="O94964-2"/>
    <property type="organism name" value="human"/>
</dbReference>
<dbReference type="AGR" id="HGNC:16111"/>
<dbReference type="CTD" id="140710"/>
<dbReference type="DisGeNET" id="140710"/>
<dbReference type="GeneCards" id="MTCL2"/>
<dbReference type="HGNC" id="HGNC:16111">
    <property type="gene designation" value="MTCL2"/>
</dbReference>
<dbReference type="HPA" id="ENSG00000149639">
    <property type="expression patterns" value="Tissue enriched (brain)"/>
</dbReference>
<dbReference type="MIM" id="620225">
    <property type="type" value="gene"/>
</dbReference>
<dbReference type="neXtProt" id="NX_O94964"/>
<dbReference type="OpenTargets" id="ENSG00000149639"/>
<dbReference type="PharmGKB" id="PA25657"/>
<dbReference type="VEuPathDB" id="HostDB:ENSG00000149639"/>
<dbReference type="eggNOG" id="KOG4787">
    <property type="taxonomic scope" value="Eukaryota"/>
</dbReference>
<dbReference type="GeneTree" id="ENSGT00950000182982"/>
<dbReference type="HOGENOM" id="CLU_002595_0_0_1"/>
<dbReference type="InParanoid" id="O94964"/>
<dbReference type="OMA" id="DDMKDHS"/>
<dbReference type="OrthoDB" id="10036174at2759"/>
<dbReference type="PAN-GO" id="O94964">
    <property type="GO annotations" value="2 GO annotations based on evolutionary models"/>
</dbReference>
<dbReference type="PhylomeDB" id="O94964"/>
<dbReference type="TreeFam" id="TF331853"/>
<dbReference type="PathwayCommons" id="O94964"/>
<dbReference type="SignaLink" id="O94964"/>
<dbReference type="BioGRID-ORCS" id="140710">
    <property type="hits" value="14 hits in 1155 CRISPR screens"/>
</dbReference>
<dbReference type="ChiTaRS" id="SOGA1">
    <property type="organism name" value="human"/>
</dbReference>
<dbReference type="GeneWiki" id="C20orf117"/>
<dbReference type="GenomeRNAi" id="140710"/>
<dbReference type="Pharos" id="O94964">
    <property type="development level" value="Tbio"/>
</dbReference>
<dbReference type="PRO" id="PR:O94964"/>
<dbReference type="Proteomes" id="UP000005640">
    <property type="component" value="Chromosome 20"/>
</dbReference>
<dbReference type="RNAct" id="O94964">
    <property type="molecule type" value="protein"/>
</dbReference>
<dbReference type="Bgee" id="ENSG00000149639">
    <property type="expression patterns" value="Expressed in cerebellum and 166 other cell types or tissues"/>
</dbReference>
<dbReference type="ExpressionAtlas" id="O94964">
    <property type="expression patterns" value="baseline and differential"/>
</dbReference>
<dbReference type="GO" id="GO:0070062">
    <property type="term" value="C:extracellular exosome"/>
    <property type="evidence" value="ECO:0007005"/>
    <property type="project" value="UniProtKB"/>
</dbReference>
<dbReference type="GO" id="GO:0005615">
    <property type="term" value="C:extracellular space"/>
    <property type="evidence" value="ECO:0000314"/>
    <property type="project" value="UniProtKB"/>
</dbReference>
<dbReference type="GO" id="GO:0000139">
    <property type="term" value="C:Golgi membrane"/>
    <property type="evidence" value="ECO:0007669"/>
    <property type="project" value="UniProtKB-SubCell"/>
</dbReference>
<dbReference type="GO" id="GO:0005874">
    <property type="term" value="C:microtubule"/>
    <property type="evidence" value="ECO:0000314"/>
    <property type="project" value="UniProtKB"/>
</dbReference>
<dbReference type="GO" id="GO:0030496">
    <property type="term" value="C:midbody"/>
    <property type="evidence" value="ECO:0000314"/>
    <property type="project" value="UniProtKB"/>
</dbReference>
<dbReference type="GO" id="GO:0051301">
    <property type="term" value="P:cell division"/>
    <property type="evidence" value="ECO:0007669"/>
    <property type="project" value="UniProtKB-KW"/>
</dbReference>
<dbReference type="GO" id="GO:0007059">
    <property type="term" value="P:chromosome segregation"/>
    <property type="evidence" value="ECO:0000315"/>
    <property type="project" value="UniProtKB"/>
</dbReference>
<dbReference type="GO" id="GO:0008286">
    <property type="term" value="P:insulin receptor signaling pathway"/>
    <property type="evidence" value="ECO:0000250"/>
    <property type="project" value="UniProtKB"/>
</dbReference>
<dbReference type="GO" id="GO:0045721">
    <property type="term" value="P:negative regulation of gluconeogenesis"/>
    <property type="evidence" value="ECO:0000250"/>
    <property type="project" value="UniProtKB"/>
</dbReference>
<dbReference type="GO" id="GO:0010506">
    <property type="term" value="P:regulation of autophagy"/>
    <property type="evidence" value="ECO:0000250"/>
    <property type="project" value="UniProtKB"/>
</dbReference>
<dbReference type="InterPro" id="IPR049885">
    <property type="entry name" value="MTCL1-3"/>
</dbReference>
<dbReference type="InterPro" id="IPR027882">
    <property type="entry name" value="SOGA1/2-like_CC"/>
</dbReference>
<dbReference type="InterPro" id="IPR027881">
    <property type="entry name" value="SOGA_CC"/>
</dbReference>
<dbReference type="PANTHER" id="PTHR15742">
    <property type="entry name" value="GIRDIN"/>
    <property type="match status" value="1"/>
</dbReference>
<dbReference type="PANTHER" id="PTHR15742:SF1">
    <property type="entry name" value="PROTEIN SOGA1"/>
    <property type="match status" value="1"/>
</dbReference>
<dbReference type="Pfam" id="PF11365">
    <property type="entry name" value="SOGA"/>
    <property type="match status" value="2"/>
</dbReference>
<dbReference type="Pfam" id="PF14818">
    <property type="entry name" value="SOGA1-2-like_CC"/>
    <property type="match status" value="1"/>
</dbReference>
<gene>
    <name evidence="7" type="primary">MTCL2</name>
    <name type="synonym">C20orf117</name>
    <name type="synonym">KIAA0889</name>
    <name type="synonym">SOGA</name>
    <name type="synonym">SOGA1</name>
</gene>
<organism>
    <name type="scientific">Homo sapiens</name>
    <name type="common">Human</name>
    <dbReference type="NCBI Taxonomy" id="9606"/>
    <lineage>
        <taxon>Eukaryota</taxon>
        <taxon>Metazoa</taxon>
        <taxon>Chordata</taxon>
        <taxon>Craniata</taxon>
        <taxon>Vertebrata</taxon>
        <taxon>Euteleostomi</taxon>
        <taxon>Mammalia</taxon>
        <taxon>Eutheria</taxon>
        <taxon>Euarchontoglires</taxon>
        <taxon>Primates</taxon>
        <taxon>Haplorrhini</taxon>
        <taxon>Catarrhini</taxon>
        <taxon>Hominidae</taxon>
        <taxon>Homo</taxon>
    </lineage>
</organism>
<evidence type="ECO:0000250" key="1">
    <source>
        <dbReference type="UniProtKB" id="E1U8D0"/>
    </source>
</evidence>
<evidence type="ECO:0000255" key="2"/>
<evidence type="ECO:0000256" key="3">
    <source>
        <dbReference type="SAM" id="MobiDB-lite"/>
    </source>
</evidence>
<evidence type="ECO:0000269" key="4">
    <source>
    </source>
</evidence>
<evidence type="ECO:0000269" key="5">
    <source>
    </source>
</evidence>
<evidence type="ECO:0000305" key="6"/>
<evidence type="ECO:0000312" key="7">
    <source>
        <dbReference type="HGNC" id="HGNC:16111"/>
    </source>
</evidence>
<evidence type="ECO:0007744" key="8">
    <source>
    </source>
</evidence>
<evidence type="ECO:0007744" key="9">
    <source>
    </source>
</evidence>
<accession>O94964</accession>
<accession>A6NK10</accession>
<accession>Q14DB2</accession>
<accession>Q5JW51</accession>
<accession>Q6ZTG8</accession>
<feature type="chain" id="PRO_0000050781" description="Microtubule cross-linking factor 2">
    <location>
        <begin position="1"/>
        <end position="1661"/>
    </location>
</feature>
<feature type="chain" id="PRO_0000418054" description="N-terminal form" evidence="1">
    <location>
        <begin position="1"/>
        <end position="926"/>
    </location>
</feature>
<feature type="chain" id="PRO_0000418055" description="C-terminal 80 kDa form" evidence="1">
    <location>
        <begin position="927"/>
        <end position="1659"/>
    </location>
</feature>
<feature type="region of interest" description="Disordered" evidence="3">
    <location>
        <begin position="1"/>
        <end position="187"/>
    </location>
</feature>
<feature type="region of interest" description="Required for association with Golgi apparatus membrane" evidence="1">
    <location>
        <begin position="211"/>
        <end position="240"/>
    </location>
</feature>
<feature type="region of interest" description="Disordered" evidence="3">
    <location>
        <begin position="353"/>
        <end position="373"/>
    </location>
</feature>
<feature type="region of interest" description="Disordered" evidence="3">
    <location>
        <begin position="1196"/>
        <end position="1221"/>
    </location>
</feature>
<feature type="region of interest" description="Disordered" evidence="3">
    <location>
        <begin position="1432"/>
        <end position="1456"/>
    </location>
</feature>
<feature type="region of interest" description="Disordered" evidence="3">
    <location>
        <begin position="1538"/>
        <end position="1563"/>
    </location>
</feature>
<feature type="region of interest" description="Disordered" evidence="3">
    <location>
        <begin position="1636"/>
        <end position="1661"/>
    </location>
</feature>
<feature type="coiled-coil region" evidence="2">
    <location>
        <begin position="218"/>
        <end position="281"/>
    </location>
</feature>
<feature type="coiled-coil region" evidence="2">
    <location>
        <begin position="310"/>
        <end position="351"/>
    </location>
</feature>
<feature type="coiled-coil region" evidence="2">
    <location>
        <begin position="450"/>
        <end position="484"/>
    </location>
</feature>
<feature type="coiled-coil region" evidence="2">
    <location>
        <begin position="820"/>
        <end position="865"/>
    </location>
</feature>
<feature type="coiled-coil region" evidence="2">
    <location>
        <begin position="1083"/>
        <end position="1117"/>
    </location>
</feature>
<feature type="compositionally biased region" description="Low complexity" evidence="3">
    <location>
        <begin position="76"/>
        <end position="94"/>
    </location>
</feature>
<feature type="compositionally biased region" description="Low complexity" evidence="3">
    <location>
        <begin position="133"/>
        <end position="149"/>
    </location>
</feature>
<feature type="compositionally biased region" description="Pro residues" evidence="3">
    <location>
        <begin position="167"/>
        <end position="176"/>
    </location>
</feature>
<feature type="compositionally biased region" description="Basic and acidic residues" evidence="3">
    <location>
        <begin position="1206"/>
        <end position="1215"/>
    </location>
</feature>
<feature type="compositionally biased region" description="Basic and acidic residues" evidence="3">
    <location>
        <begin position="1652"/>
        <end position="1661"/>
    </location>
</feature>
<feature type="site" description="Cleavage" evidence="1">
    <location>
        <begin position="926"/>
        <end position="927"/>
    </location>
</feature>
<feature type="modified residue" description="Phosphoserine" evidence="8">
    <location>
        <position position="1169"/>
    </location>
</feature>
<feature type="modified residue" description="Phosphoserine" evidence="8 9">
    <location>
        <position position="1255"/>
    </location>
</feature>
<feature type="splice variant" id="VSP_062222" description="In isoform 3.">
    <original>MEAPAAEPPVRGCGPQPAPAPAPAPERKKSHRAPSPARPKDVAGWSLAKGRRGPGPGSAVACSAAFSSRPDKKGRAVAPGARGAGVRVAGVRTGVRAKGRPRSGAGPRPPPPPPSLTDSSSEVSDCASEEARLLGLELALSSDAESAAGGPAGVRTGQPAQPAPSAQQPPRPPASPDEPSVAASSVGSSRLPLSASLAFSDLTEEMLDCGPSGLVRELEELRSENDYLKDEIEELRAEMLEMRDVYMEEDVYQLQELRQQLDQASKTCRILQYRLRKAERRSLRAAQTGQVDGELIRGLEQDVKVSKDISMRLHKELEVVEKKRARLEEENEELRQRLIETELAKQVLQTELERPREHSLKKRGTRSLGKADKKTLVQEDSADLKCQLHFAKEESALMCKKLTKLAKENDSMKEELLKYRSLYGDLDSALSAEELADAPHSRETELKVHLKLVEEEANLLSRRIVELEVENRGLRAEMDDMKDHGGGCGGPEARLAFSALGGGECGESLAELRRHLQFVEEEAELLRRSSAELEDQNKLLLNELAKFRSEHELDVALSEDSCSVLSEPSQEELAAAKLQIGELSGKVKKLQYENRVLLSNLQRCDLASCQSTRPMLETDAEAGDSAQCVPAPLGETHESHAVRLCRAREAEVLPGLREQAALVSKAIDVLVADANGFTAGLRLCLDNECADFRLHEAPDNSEGPRDTKLIHAILVRLSVLQQELNAFTRKADAVLGCSVKEQQESFSSLPPLGSQGLSKEILLAKDLGSDFQPPDFRDLPEWEPRIREAFRTGDLDSKPDPSRSFRPYRAEDNDSYASEIKELQLVLAEAHDSLRGLQEQLSQERQLRKEEADNFNQKMVQLKEDQQRALLRREFELQSLSLQRRLEQKFWSQEKNMLVQESQQFKHNFLLLFMKLRWFLKRWRQGKVLPSEGDDFLEVNSMKELYLLMEEEEINAQHSDNKACTGDSWTQNTPNEYIKTLADMKVTLKELCWLLRDERRGLTELQQQFAKAKATWETERAELKGHTSQMELKTGKGAGERAGPDWKAALQREREEQQHLLAESYSAVMELTRQLQISERNWSQEKLQLVERLQGEKQQVEQQVKELQNRLSQLQKAADPWVLKHSELEKQDNSWKETRSEKIHDKEAVSEVELGGNGLK</original>
    <variation>MWDWAPTTSLQEVNKTVLVFALTQHTDQGGRPECALSVISTNNDVSSSVLR</variation>
    <location>
        <begin position="1"/>
        <end position="1160"/>
    </location>
</feature>
<feature type="splice variant" id="VSP_062223" description="In isoform 2 and isoform 4.">
    <location>
        <begin position="1"/>
        <end position="238"/>
    </location>
</feature>
<feature type="splice variant" id="VSP_062224" description="In isoform 4.">
    <original>MQRSYTAPDKTGIRVYYSPPVARRLGVPVVHDKEGKIIIEPGFLFTTAKPKESAEADGLAESSYGRWLCNFSRQRLDGGSAGSPSAAGPGFPAALHDFEMSGNMSDDMKEITNCVRQAMRSGSLERKVKSTSSQTVGLASVGTQTIRTVSVGLQTDPPRSSLHGKAWSPRSSSLVSVRSKQISSSLDKVHSRIERPCCSPKYGSPKLQRRSVSKLDSSKDRSLWNLHQGKQNGSAWARSTTTRDSPVLRNINDGLSSLFSVVEHSGSTESVWKLGMSETRAKPEPPKYGIVQEFFRNVCGRAPSPTSSAGEEGTKKPEPLSPASYHQPEGVARILNKKAAKLGSSEEVRLTMLPQVGKDGVLRDGDGAVVLPNEDAVCDCSTQSLTSCFARSSRSAIRHSPSKCRLHPSESSWGGEERALPPSE</original>
    <variation>KLPFLLILAPPQPPPIL</variation>
    <location>
        <begin position="1238"/>
        <end position="1661"/>
    </location>
</feature>
<feature type="splice variant" id="VSP_062225" description="In isoform 3.">
    <original>DAVCDCSTQSLTSCFA</original>
    <variation>VGGWDLSFLLVGGVSI</variation>
    <location>
        <begin position="1612"/>
        <end position="1627"/>
    </location>
</feature>
<feature type="splice variant" id="VSP_062226" description="In isoform 3.">
    <location>
        <begin position="1628"/>
        <end position="1661"/>
    </location>
</feature>
<feature type="sequence variant" id="VAR_056848" description="In dbSNP:rs34459518.">
    <original>Q</original>
    <variation>H</variation>
    <location>
        <position position="1231"/>
    </location>
</feature>
<sequence>MEAPAAEPPVRGCGPQPAPAPAPAPERKKSHRAPSPARPKDVAGWSLAKGRRGPGPGSAVACSAAFSSRPDKKGRAVAPGARGAGVRVAGVRTGVRAKGRPRSGAGPRPPPPPPSLTDSSSEVSDCASEEARLLGLELALSSDAESAAGGPAGVRTGQPAQPAPSAQQPPRPPASPDEPSVAASSVGSSRLPLSASLAFSDLTEEMLDCGPSGLVRELEELRSENDYLKDEIEELRAEMLEMRDVYMEEDVYQLQELRQQLDQASKTCRILQYRLRKAERRSLRAAQTGQVDGELIRGLEQDVKVSKDISMRLHKELEVVEKKRARLEEENEELRQRLIETELAKQVLQTELERPREHSLKKRGTRSLGKADKKTLVQEDSADLKCQLHFAKEESALMCKKLTKLAKENDSMKEELLKYRSLYGDLDSALSAEELADAPHSRETELKVHLKLVEEEANLLSRRIVELEVENRGLRAEMDDMKDHGGGCGGPEARLAFSALGGGECGESLAELRRHLQFVEEEAELLRRSSAELEDQNKLLLNELAKFRSEHELDVALSEDSCSVLSEPSQEELAAAKLQIGELSGKVKKLQYENRVLLSNLQRCDLASCQSTRPMLETDAEAGDSAQCVPAPLGETHESHAVRLCRAREAEVLPGLREQAALVSKAIDVLVADANGFTAGLRLCLDNECADFRLHEAPDNSEGPRDTKLIHAILVRLSVLQQELNAFTRKADAVLGCSVKEQQESFSSLPPLGSQGLSKEILLAKDLGSDFQPPDFRDLPEWEPRIREAFRTGDLDSKPDPSRSFRPYRAEDNDSYASEIKELQLVLAEAHDSLRGLQEQLSQERQLRKEEADNFNQKMVQLKEDQQRALLRREFELQSLSLQRRLEQKFWSQEKNMLVQESQQFKHNFLLLFMKLRWFLKRWRQGKVLPSEGDDFLEVNSMKELYLLMEEEEINAQHSDNKACTGDSWTQNTPNEYIKTLADMKVTLKELCWLLRDERRGLTELQQQFAKAKATWETERAELKGHTSQMELKTGKGAGERAGPDWKAALQREREEQQHLLAESYSAVMELTRQLQISERNWSQEKLQLVERLQGEKQQVEQQVKELQNRLSQLQKAADPWVLKHSELEKQDNSWKETRSEKIHDKEAVSEVELGGNGLKRTKSVSSMSEFESLLDCSPYLAGGDARGKKLPNNPAFGFVSSEPGDPEKDTKEKPGLSSRDCNHLGALACQDPPGRQMQRSYTAPDKTGIRVYYSPPVARRLGVPVVHDKEGKIIIEPGFLFTTAKPKESAEADGLAESSYGRWLCNFSRQRLDGGSAGSPSAAGPGFPAALHDFEMSGNMSDDMKEITNCVRQAMRSGSLERKVKSTSSQTVGLASVGTQTIRTVSVGLQTDPPRSSLHGKAWSPRSSSLVSVRSKQISSSLDKVHSRIERPCCSPKYGSPKLQRRSVSKLDSSKDRSLWNLHQGKQNGSAWARSTTTRDSPVLRNINDGLSSLFSVVEHSGSTESVWKLGMSETRAKPEPPKYGIVQEFFRNVCGRAPSPTSSAGEEGTKKPEPLSPASYHQPEGVARILNKKAAKLGSSEEVRLTMLPQVGKDGVLRDGDGAVVLPNEDAVCDCSTQSLTSCFARSSRSAIRHSPSKCRLHPSESSWGGEERALPPSE</sequence>
<name>MTCL2_HUMAN</name>
<keyword id="KW-0025">Alternative splicing</keyword>
<keyword id="KW-0131">Cell cycle</keyword>
<keyword id="KW-0132">Cell division</keyword>
<keyword id="KW-0175">Coiled coil</keyword>
<keyword id="KW-0963">Cytoplasm</keyword>
<keyword id="KW-0206">Cytoskeleton</keyword>
<keyword id="KW-0333">Golgi apparatus</keyword>
<keyword id="KW-0472">Membrane</keyword>
<keyword id="KW-0498">Mitosis</keyword>
<keyword id="KW-0597">Phosphoprotein</keyword>
<keyword id="KW-1267">Proteomics identification</keyword>
<keyword id="KW-1185">Reference proteome</keyword>
<keyword id="KW-0964">Secreted</keyword>
<proteinExistence type="evidence at protein level"/>
<protein>
    <recommendedName>
        <fullName evidence="6">Microtubule cross-linking factor 2</fullName>
    </recommendedName>
    <alternativeName>
        <fullName>SOGA family member 1</fullName>
    </alternativeName>
    <alternativeName>
        <fullName>Suppressor of glucose by autophagy</fullName>
    </alternativeName>
    <alternativeName>
        <fullName>Suppressor of glucose, autophagy-associated protein 1</fullName>
    </alternativeName>
    <component>
        <recommendedName>
            <fullName>N-terminal form</fullName>
        </recommendedName>
    </component>
    <component>
        <recommendedName>
            <fullName>C-terminal 80 kDa form</fullName>
            <shortName>80-kDa SOGA fragment</shortName>
        </recommendedName>
    </component>
</protein>
<comment type="function">
    <text evidence="1 5">Microtubule-associated factor that enables integration of the centrosomal and Golgi-associated microtubules on the Golgi membrane, supporting directional migration. Preferentially acts on the perinuclear microtubules accumulated around the Golgi. Associates with the Golgi membrane through the N-terminal coiled-coil region and directly binds microtubules through the C-terminal domain (By similarity). Required for faithful chromosome segregation during mitosis (PubMed:33587225). Regulates autophagy by playing a role in the reduction of glucose production in an adiponectin- and insulin-dependent manner (By similarity).</text>
</comment>
<comment type="subunit">
    <text evidence="1 5">Interacts with CLASP1 and CLASP2 (PubMed:33587225). The C-terminal 25 kDa form occurs as a monomer (By similarity).</text>
</comment>
<comment type="interaction">
    <interactant intactId="EBI-14083835">
        <id>O94964-4</id>
    </interactant>
    <interactant intactId="EBI-746752">
        <id>Q9Y2J4</id>
        <label>AMOTL2</label>
    </interactant>
    <organismsDiffer>false</organismsDiffer>
    <experiments>3</experiments>
</comment>
<comment type="interaction">
    <interactant intactId="EBI-14083835">
        <id>O94964-4</id>
    </interactant>
    <interactant intactId="EBI-711810">
        <id>O14503</id>
        <label>BHLHE40</label>
    </interactant>
    <organismsDiffer>false</organismsDiffer>
    <experiments>3</experiments>
</comment>
<comment type="interaction">
    <interactant intactId="EBI-14083835">
        <id>O94964-4</id>
    </interactant>
    <interactant intactId="EBI-2349927">
        <id>Q5JST6</id>
        <label>EFHC2</label>
    </interactant>
    <organismsDiffer>false</organismsDiffer>
    <experiments>3</experiments>
</comment>
<comment type="interaction">
    <interactant intactId="EBI-14083835">
        <id>O94964-4</id>
    </interactant>
    <interactant intactId="EBI-719941">
        <id>Q3B820</id>
        <label>FAM161A</label>
    </interactant>
    <organismsDiffer>false</organismsDiffer>
    <experiments>3</experiments>
</comment>
<comment type="interaction">
    <interactant intactId="EBI-14083835">
        <id>O94964-4</id>
    </interactant>
    <interactant intactId="EBI-12094670">
        <id>Q8WUI4-6</id>
        <label>HDAC7</label>
    </interactant>
    <organismsDiffer>false</organismsDiffer>
    <experiments>3</experiments>
</comment>
<comment type="interaction">
    <interactant intactId="EBI-14083835">
        <id>O94964-4</id>
    </interactant>
    <interactant intactId="EBI-1216080">
        <id>Q9Y250</id>
        <label>LZTS1</label>
    </interactant>
    <organismsDiffer>false</organismsDiffer>
    <experiments>3</experiments>
</comment>
<comment type="interaction">
    <interactant intactId="EBI-14083835">
        <id>O94964-4</id>
    </interactant>
    <interactant intactId="EBI-10172876">
        <id>Q7Z6G3-2</id>
        <label>NECAB2</label>
    </interactant>
    <organismsDiffer>false</organismsDiffer>
    <experiments>3</experiments>
</comment>
<comment type="interaction">
    <interactant intactId="EBI-14083835">
        <id>O94964-4</id>
    </interactant>
    <interactant intactId="EBI-1105153">
        <id>Q96KQ4</id>
        <label>PPP1R13B</label>
    </interactant>
    <organismsDiffer>false</organismsDiffer>
    <experiments>3</experiments>
</comment>
<comment type="interaction">
    <interactant intactId="EBI-14083835">
        <id>O94964-4</id>
    </interactant>
    <interactant intactId="EBI-18560266">
        <id>Q92753-1</id>
        <label>RORB</label>
    </interactant>
    <organismsDiffer>false</organismsDiffer>
    <experiments>3</experiments>
</comment>
<comment type="interaction">
    <interactant intactId="EBI-14083835">
        <id>O94964-4</id>
    </interactant>
    <interactant intactId="EBI-714135">
        <id>O75558</id>
        <label>STX11</label>
    </interactant>
    <organismsDiffer>false</organismsDiffer>
    <experiments>3</experiments>
</comment>
<comment type="interaction">
    <interactant intactId="EBI-14083835">
        <id>O94964-4</id>
    </interactant>
    <interactant intactId="EBI-1105213">
        <id>Q9UBB9</id>
        <label>TFIP11</label>
    </interactant>
    <organismsDiffer>false</organismsDiffer>
    <experiments>3</experiments>
</comment>
<comment type="interaction">
    <interactant intactId="EBI-14083835">
        <id>O94964-4</id>
    </interactant>
    <interactant intactId="EBI-21353855">
        <id>Q99598</id>
        <label>TSNAX</label>
    </interactant>
    <organismsDiffer>false</organismsDiffer>
    <experiments>3</experiments>
</comment>
<comment type="interaction">
    <interactant intactId="EBI-14083835">
        <id>O94964-4</id>
    </interactant>
    <interactant intactId="EBI-717634">
        <id>P17024</id>
        <label>ZNF20</label>
    </interactant>
    <organismsDiffer>false</organismsDiffer>
    <experiments>3</experiments>
</comment>
<comment type="subcellular location">
    <subcellularLocation>
        <location evidence="5">Cytoplasm</location>
        <location evidence="5">Cytoskeleton</location>
    </subcellularLocation>
    <subcellularLocation>
        <location evidence="1">Golgi apparatus membrane</location>
    </subcellularLocation>
    <subcellularLocation>
        <location evidence="5">Midbody</location>
    </subcellularLocation>
    <text evidence="5">Associates with microtubules during late mitosis and interphase.</text>
</comment>
<comment type="subcellular location">
    <molecule>C-terminal 80 kDa form</molecule>
    <subcellularLocation>
        <location evidence="1">Secreted</location>
    </subcellularLocation>
    <text evidence="1">Secreted in primary hepatocyte-conditioned media.</text>
</comment>
<comment type="alternative products">
    <event type="alternative splicing"/>
    <isoform>
        <id>O94964-2</id>
        <name>1</name>
        <sequence type="displayed"/>
    </isoform>
    <isoform>
        <id>O94964-1</id>
        <name>2</name>
        <sequence type="described" ref="VSP_062223"/>
    </isoform>
    <isoform>
        <id>O94964-3</id>
        <name>3</name>
        <sequence type="described" ref="VSP_062222 VSP_062225 VSP_062226"/>
    </isoform>
    <isoform>
        <id>O94964-4</id>
        <name>4</name>
        <sequence type="described" ref="VSP_062223 VSP_062224"/>
    </isoform>
</comment>
<comment type="induction">
    <text evidence="4">Up-regulated in the plasma by adiponectin in healthy fasting female.</text>
</comment>
<comment type="domain">
    <text evidence="1">Associates with the Golgi membrane through the N-terminal coiled-coil region and directly binds microtubules through the C-terminal domain.</text>
</comment>
<comment type="PTM">
    <text evidence="1 4">Proteolytically cleaved in primary hepatocytes into a C-terminal 80 kDa form (By similarity). Proteolytically cleaved into a C-terminal SOGA 25 kDa form that is detected in plasma.</text>
</comment>
<comment type="PTM">
    <text evidence="5">Phosphorylated during mitosis in a CDK1-dependent manner.</text>
</comment>
<comment type="similarity">
    <text evidence="6">Belongs to the MTCL family.</text>
</comment>
<comment type="sequence caution" evidence="6">
    <conflict type="erroneous initiation">
        <sequence resource="EMBL-CDS" id="BAA74912"/>
    </conflict>
    <text>Extended N-terminus.</text>
</comment>